<dbReference type="EMBL" id="AC001229">
    <property type="protein sequence ID" value="AAB60905.1"/>
    <property type="molecule type" value="Genomic_DNA"/>
</dbReference>
<dbReference type="EMBL" id="CP002684">
    <property type="protein sequence ID" value="AEE34390.1"/>
    <property type="molecule type" value="Genomic_DNA"/>
</dbReference>
<dbReference type="PIR" id="H96679">
    <property type="entry name" value="H96679"/>
</dbReference>
<dbReference type="RefSeq" id="NP_564855.1">
    <property type="nucleotide sequence ID" value="NM_105224.3"/>
</dbReference>
<dbReference type="FunCoup" id="O04468">
    <property type="interactions" value="3"/>
</dbReference>
<dbReference type="STRING" id="3702.O04468"/>
<dbReference type="PaxDb" id="3702-AT1G65500.1"/>
<dbReference type="EnsemblPlants" id="AT1G65500.1">
    <property type="protein sequence ID" value="AT1G65500.1"/>
    <property type="gene ID" value="AT1G65500"/>
</dbReference>
<dbReference type="GeneID" id="842862"/>
<dbReference type="Gramene" id="AT1G65500.1">
    <property type="protein sequence ID" value="AT1G65500.1"/>
    <property type="gene ID" value="AT1G65500"/>
</dbReference>
<dbReference type="KEGG" id="ath:AT1G65500"/>
<dbReference type="Araport" id="AT1G65500"/>
<dbReference type="TAIR" id="AT1G65500">
    <property type="gene designation" value="STMP6"/>
</dbReference>
<dbReference type="HOGENOM" id="CLU_194966_0_0_1"/>
<dbReference type="InParanoid" id="O04468"/>
<dbReference type="OMA" id="MKSPNIA"/>
<dbReference type="PRO" id="PR:O04468"/>
<dbReference type="Proteomes" id="UP000006548">
    <property type="component" value="Chromosome 1"/>
</dbReference>
<dbReference type="ExpressionAtlas" id="O04468">
    <property type="expression patterns" value="baseline and differential"/>
</dbReference>
<dbReference type="GO" id="GO:0048046">
    <property type="term" value="C:apoplast"/>
    <property type="evidence" value="ECO:0000314"/>
    <property type="project" value="UniProtKB"/>
</dbReference>
<dbReference type="GO" id="GO:0005886">
    <property type="term" value="C:plasma membrane"/>
    <property type="evidence" value="ECO:0000314"/>
    <property type="project" value="TAIR"/>
</dbReference>
<dbReference type="GO" id="GO:0030275">
    <property type="term" value="F:LRR domain binding"/>
    <property type="evidence" value="ECO:0000250"/>
    <property type="project" value="UniProtKB"/>
</dbReference>
<dbReference type="GO" id="GO:0033612">
    <property type="term" value="F:receptor serine/threonine kinase binding"/>
    <property type="evidence" value="ECO:0000250"/>
    <property type="project" value="UniProtKB"/>
</dbReference>
<dbReference type="GO" id="GO:0009617">
    <property type="term" value="P:response to bacterium"/>
    <property type="evidence" value="ECO:0000270"/>
    <property type="project" value="UniProtKB"/>
</dbReference>
<dbReference type="GO" id="GO:0009409">
    <property type="term" value="P:response to cold"/>
    <property type="evidence" value="ECO:0000270"/>
    <property type="project" value="UniProtKB"/>
</dbReference>
<dbReference type="GO" id="GO:0009723">
    <property type="term" value="P:response to ethylene"/>
    <property type="evidence" value="ECO:0000270"/>
    <property type="project" value="UniProtKB"/>
</dbReference>
<dbReference type="GO" id="GO:0009753">
    <property type="term" value="P:response to jasmonic acid"/>
    <property type="evidence" value="ECO:0000270"/>
    <property type="project" value="UniProtKB"/>
</dbReference>
<dbReference type="GO" id="GO:0009751">
    <property type="term" value="P:response to salicylic acid"/>
    <property type="evidence" value="ECO:0000270"/>
    <property type="project" value="UniProtKB"/>
</dbReference>
<dbReference type="GO" id="GO:0009651">
    <property type="term" value="P:response to salt stress"/>
    <property type="evidence" value="ECO:0000270"/>
    <property type="project" value="UniProtKB"/>
</dbReference>
<dbReference type="GO" id="GO:0009414">
    <property type="term" value="P:response to water deprivation"/>
    <property type="evidence" value="ECO:0000270"/>
    <property type="project" value="UniProtKB"/>
</dbReference>
<reference key="1">
    <citation type="journal article" date="2000" name="Nature">
        <title>Sequence and analysis of chromosome 1 of the plant Arabidopsis thaliana.</title>
        <authorList>
            <person name="Theologis A."/>
            <person name="Ecker J.R."/>
            <person name="Palm C.J."/>
            <person name="Federspiel N.A."/>
            <person name="Kaul S."/>
            <person name="White O."/>
            <person name="Alonso J."/>
            <person name="Altafi H."/>
            <person name="Araujo R."/>
            <person name="Bowman C.L."/>
            <person name="Brooks S.Y."/>
            <person name="Buehler E."/>
            <person name="Chan A."/>
            <person name="Chao Q."/>
            <person name="Chen H."/>
            <person name="Cheuk R.F."/>
            <person name="Chin C.W."/>
            <person name="Chung M.K."/>
            <person name="Conn L."/>
            <person name="Conway A.B."/>
            <person name="Conway A.R."/>
            <person name="Creasy T.H."/>
            <person name="Dewar K."/>
            <person name="Dunn P."/>
            <person name="Etgu P."/>
            <person name="Feldblyum T.V."/>
            <person name="Feng J.-D."/>
            <person name="Fong B."/>
            <person name="Fujii C.Y."/>
            <person name="Gill J.E."/>
            <person name="Goldsmith A.D."/>
            <person name="Haas B."/>
            <person name="Hansen N.F."/>
            <person name="Hughes B."/>
            <person name="Huizar L."/>
            <person name="Hunter J.L."/>
            <person name="Jenkins J."/>
            <person name="Johnson-Hopson C."/>
            <person name="Khan S."/>
            <person name="Khaykin E."/>
            <person name="Kim C.J."/>
            <person name="Koo H.L."/>
            <person name="Kremenetskaia I."/>
            <person name="Kurtz D.B."/>
            <person name="Kwan A."/>
            <person name="Lam B."/>
            <person name="Langin-Hooper S."/>
            <person name="Lee A."/>
            <person name="Lee J.M."/>
            <person name="Lenz C.A."/>
            <person name="Li J.H."/>
            <person name="Li Y.-P."/>
            <person name="Lin X."/>
            <person name="Liu S.X."/>
            <person name="Liu Z.A."/>
            <person name="Luros J.S."/>
            <person name="Maiti R."/>
            <person name="Marziali A."/>
            <person name="Militscher J."/>
            <person name="Miranda M."/>
            <person name="Nguyen M."/>
            <person name="Nierman W.C."/>
            <person name="Osborne B.I."/>
            <person name="Pai G."/>
            <person name="Peterson J."/>
            <person name="Pham P.K."/>
            <person name="Rizzo M."/>
            <person name="Rooney T."/>
            <person name="Rowley D."/>
            <person name="Sakano H."/>
            <person name="Salzberg S.L."/>
            <person name="Schwartz J.R."/>
            <person name="Shinn P."/>
            <person name="Southwick A.M."/>
            <person name="Sun H."/>
            <person name="Tallon L.J."/>
            <person name="Tambunga G."/>
            <person name="Toriumi M.J."/>
            <person name="Town C.D."/>
            <person name="Utterback T."/>
            <person name="Van Aken S."/>
            <person name="Vaysberg M."/>
            <person name="Vysotskaia V.S."/>
            <person name="Walker M."/>
            <person name="Wu D."/>
            <person name="Yu G."/>
            <person name="Fraser C.M."/>
            <person name="Venter J.C."/>
            <person name="Davis R.W."/>
        </authorList>
    </citation>
    <scope>NUCLEOTIDE SEQUENCE [LARGE SCALE GENOMIC DNA]</scope>
    <source>
        <strain>cv. Columbia</strain>
    </source>
</reference>
<reference key="2">
    <citation type="journal article" date="2017" name="Plant J.">
        <title>Araport11: a complete reannotation of the Arabidopsis thaliana reference genome.</title>
        <authorList>
            <person name="Cheng C.Y."/>
            <person name="Krishnakumar V."/>
            <person name="Chan A.P."/>
            <person name="Thibaud-Nissen F."/>
            <person name="Schobel S."/>
            <person name="Town C.D."/>
        </authorList>
    </citation>
    <scope>GENOME REANNOTATION</scope>
    <source>
        <strain>cv. Columbia</strain>
    </source>
</reference>
<reference key="3">
    <citation type="journal article" date="2020" name="J. Integr. Plant Biol.">
        <title>The Brassicaceae-specific secreted peptides, STMPs, function in plant growth and pathogen defense.</title>
        <authorList>
            <person name="Yu Z."/>
            <person name="Xu Y."/>
            <person name="Zhu L."/>
            <person name="Zhang L."/>
            <person name="Liu L."/>
            <person name="Zhang D."/>
            <person name="Li D."/>
            <person name="Wu C."/>
            <person name="Huang J."/>
            <person name="Yang G."/>
            <person name="Yan K."/>
            <person name="Zhang S."/>
            <person name="Zheng C."/>
        </authorList>
    </citation>
    <scope>FUNCTION</scope>
    <scope>DISRUPTION PHENOTYPE</scope>
    <scope>SUBCELLULAR LOCATION</scope>
    <scope>TISSUE SPECIFICITY</scope>
    <scope>INDUCTION BY BIOTIC AND ABIOTIC STRESSES</scope>
    <scope>GENE FAMILY</scope>
    <scope>NOMENCLATURE</scope>
    <source>
        <strain>cv. Columbia</strain>
    </source>
</reference>
<name>STMP6_ARATH</name>
<keyword id="KW-0052">Apoplast</keyword>
<keyword id="KW-1003">Cell membrane</keyword>
<keyword id="KW-0165">Cleavage on pair of basic residues</keyword>
<keyword id="KW-0472">Membrane</keyword>
<keyword id="KW-1185">Reference proteome</keyword>
<keyword id="KW-0964">Secreted</keyword>
<keyword id="KW-0732">Signal</keyword>
<accession>O04468</accession>
<proteinExistence type="evidence at transcript level"/>
<gene>
    <name evidence="5" type="primary">STMP6</name>
    <name evidence="7" type="ordered locus">At1g65500</name>
    <name evidence="8" type="ORF">F5I14.4</name>
</gene>
<protein>
    <recommendedName>
        <fullName evidence="5">Secreted transmembrane peptide 6</fullName>
    </recommendedName>
    <alternativeName>
        <fullName evidence="6">Phytocytokine STMP6</fullName>
    </alternativeName>
    <alternativeName>
        <fullName evidence="6">Precursor of secreted transmembrane peptide 6</fullName>
    </alternativeName>
</protein>
<evidence type="ECO:0000250" key="1">
    <source>
        <dbReference type="UniProtKB" id="A0A1P8AQ95"/>
    </source>
</evidence>
<evidence type="ECO:0000250" key="2">
    <source>
        <dbReference type="UniProtKB" id="B3H7I1"/>
    </source>
</evidence>
<evidence type="ECO:0000255" key="3"/>
<evidence type="ECO:0000269" key="4">
    <source>
    </source>
</evidence>
<evidence type="ECO:0000303" key="5">
    <source>
    </source>
</evidence>
<evidence type="ECO:0000305" key="6"/>
<evidence type="ECO:0000312" key="7">
    <source>
        <dbReference type="Araport" id="AT1G65500"/>
    </source>
</evidence>
<evidence type="ECO:0000312" key="8">
    <source>
        <dbReference type="EMBL" id="AAB60905.1"/>
    </source>
</evidence>
<sequence>MGMKSPNIAAFMLPLLLILFTLSSQLKVVESTGRKLAWGFSGTPIVYTPPSRSCGTSPAVFTSKWRRPRPCRLPPGSYIPASDQSP</sequence>
<organism>
    <name type="scientific">Arabidopsis thaliana</name>
    <name type="common">Mouse-ear cress</name>
    <dbReference type="NCBI Taxonomy" id="3702"/>
    <lineage>
        <taxon>Eukaryota</taxon>
        <taxon>Viridiplantae</taxon>
        <taxon>Streptophyta</taxon>
        <taxon>Embryophyta</taxon>
        <taxon>Tracheophyta</taxon>
        <taxon>Spermatophyta</taxon>
        <taxon>Magnoliopsida</taxon>
        <taxon>eudicotyledons</taxon>
        <taxon>Gunneridae</taxon>
        <taxon>Pentapetalae</taxon>
        <taxon>rosids</taxon>
        <taxon>malvids</taxon>
        <taxon>Brassicales</taxon>
        <taxon>Brassicaceae</taxon>
        <taxon>Camelineae</taxon>
        <taxon>Arabidopsis</taxon>
    </lineage>
</organism>
<feature type="signal peptide" evidence="3">
    <location>
        <begin position="1"/>
        <end position="31"/>
    </location>
</feature>
<feature type="propeptide" id="PRO_0000457266" description="Removed in mature form" evidence="2">
    <location>
        <begin position="32"/>
        <end status="unknown"/>
    </location>
</feature>
<feature type="peptide" id="PRO_0000457267" description="Secreted transmembrane peptide 6" evidence="2">
    <location>
        <begin status="unknown"/>
        <end position="86"/>
    </location>
</feature>
<feature type="short sequence motif" description="SCOOP motif" evidence="1">
    <location>
        <begin position="45"/>
        <end position="58"/>
    </location>
</feature>
<feature type="short sequence motif" description="SxS motif essential for MIK2 binding" evidence="2">
    <location>
        <begin position="51"/>
        <end position="53"/>
    </location>
</feature>
<comment type="function">
    <text evidence="2 4">Brassicaceae-specific phytocytokine (plant endogenous peptide released into the apoplast) perceived by MIK2 in a BAK1/SERK3 and SERK4 coreceptors-dependent manner, that modulates various physiological and antimicrobial processes including growth prevention and reactive oxygen species (ROS) response regulation (By similarity). Prevents general growth and development (PubMed:31001913).</text>
</comment>
<comment type="subunit">
    <text evidence="2">Interacts with MIK2 (via extracellular leucine-rich repeat domain); this interaction triggers the formation of complex between MIK2 and the BAK1/SERK3 and SERK4 coreceptors, and subsequent BAK1 activation by phosphorylation.</text>
</comment>
<comment type="subcellular location">
    <subcellularLocation>
        <location evidence="4">Cell membrane</location>
    </subcellularLocation>
    <subcellularLocation>
        <location evidence="4">Secreted</location>
        <location evidence="4">Extracellular space</location>
        <location evidence="4">Apoplast</location>
    </subcellularLocation>
    <text evidence="4">The precursor of STMP6 accumulates at the plasma membrane and is proteolytically cleaved to release the STMP6 in the apoplasm.</text>
</comment>
<comment type="tissue specificity">
    <text evidence="4">Mostly expressed in leaves, and, to a lower extent, in roots, stems, siliques, seeds and flowers.</text>
</comment>
<comment type="induction">
    <text evidence="4">Induced by cold, drought and salt stress, but repressed by pathogenic bacteria Pseudomonas syringae pv. tomato (Pst) DC3000, jasmonate (MeJA), ethylene (ET) and salicylic acid (SA), mainly in shoots.</text>
</comment>
<comment type="disruption phenotype">
    <text evidence="4">Slightly increased growth and fresh weight.</text>
</comment>
<comment type="similarity">
    <text evidence="6">Belongs to the serine rich endogenous peptide (SCOOP) phytocytokine family.</text>
</comment>